<name>ATPB_NICSP</name>
<protein>
    <recommendedName>
        <fullName evidence="1">ATP synthase subunit beta, chloroplastic</fullName>
        <ecNumber evidence="1">7.1.2.2</ecNumber>
    </recommendedName>
    <alternativeName>
        <fullName evidence="1">ATP synthase F1 sector subunit beta</fullName>
    </alternativeName>
    <alternativeName>
        <fullName evidence="1">F-ATPase subunit beta</fullName>
    </alternativeName>
</protein>
<keyword id="KW-0066">ATP synthesis</keyword>
<keyword id="KW-0067">ATP-binding</keyword>
<keyword id="KW-0139">CF(1)</keyword>
<keyword id="KW-0150">Chloroplast</keyword>
<keyword id="KW-0375">Hydrogen ion transport</keyword>
<keyword id="KW-0406">Ion transport</keyword>
<keyword id="KW-0472">Membrane</keyword>
<keyword id="KW-0547">Nucleotide-binding</keyword>
<keyword id="KW-0934">Plastid</keyword>
<keyword id="KW-0793">Thylakoid</keyword>
<keyword id="KW-1278">Translocase</keyword>
<keyword id="KW-0813">Transport</keyword>
<sequence>MRIDPTTSGSGVSTLEKKKPGRVVQIIGPVLDVAFPPGKMPNIYNALVVQGRDSVGQPINVACEVQQLLGNNRVRAVAMSATDGLTRGMEVIDTGAPISVPVGGATLGRIFNVLGEPVDNLGPVDTSTTSPIHRSAPAFIQLDTKLSIFETGIKVVDLLAPYRRGGKIGLFGGAGVGKTVLIMELINNIAKAHGGVSVFGGVGERTREGNDLYMEMKESGVINEENIAESKVALVYGQMNEPPGARMRVGLTALTMAEYFRDVNEQDVLLFIDNIFRFVQAGSEVSALLGRMPSAVGYQPTLSTEMGSLQERITSTKEGSITSIQAVYVPADDLTDPAPATTFAHLDATTVLSRGLDAKGIYPAVDPLDSTSTMLQPRIVGEEHYETAQRVKQTLQRYKELQDIIAILGLDELSEEDRLLVARARKIERFLSQPFFVAEVFTGSPGKYVGLAETIRGFQLILSGELDGLPEQAFYLVGNIDEATAKAMNLEMESNLKK</sequence>
<comment type="function">
    <text evidence="1">Produces ATP from ADP in the presence of a proton gradient across the membrane. The catalytic sites are hosted primarily by the beta subunits.</text>
</comment>
<comment type="catalytic activity">
    <reaction evidence="1">
        <text>ATP + H2O + 4 H(+)(in) = ADP + phosphate + 5 H(+)(out)</text>
        <dbReference type="Rhea" id="RHEA:57720"/>
        <dbReference type="ChEBI" id="CHEBI:15377"/>
        <dbReference type="ChEBI" id="CHEBI:15378"/>
        <dbReference type="ChEBI" id="CHEBI:30616"/>
        <dbReference type="ChEBI" id="CHEBI:43474"/>
        <dbReference type="ChEBI" id="CHEBI:456216"/>
        <dbReference type="EC" id="7.1.2.2"/>
    </reaction>
</comment>
<comment type="subunit">
    <text evidence="1">F-type ATPases have 2 components, CF(1) - the catalytic core - and CF(0) - the membrane proton channel. CF(1) has five subunits: alpha(3), beta(3), gamma(1), delta(1), epsilon(1). CF(0) has four main subunits: a(1), b(1), b'(1) and c(9-12).</text>
</comment>
<comment type="subcellular location">
    <subcellularLocation>
        <location evidence="1">Plastid</location>
        <location evidence="1">Chloroplast thylakoid membrane</location>
        <topology evidence="1">Peripheral membrane protein</topology>
    </subcellularLocation>
</comment>
<comment type="similarity">
    <text evidence="1">Belongs to the ATPase alpha/beta chains family.</text>
</comment>
<organism>
    <name type="scientific">Nicotiana sp.</name>
    <name type="common">Tobacco</name>
    <dbReference type="NCBI Taxonomy" id="4094"/>
    <lineage>
        <taxon>Eukaryota</taxon>
        <taxon>Viridiplantae</taxon>
        <taxon>Streptophyta</taxon>
        <taxon>Embryophyta</taxon>
        <taxon>Tracheophyta</taxon>
        <taxon>Spermatophyta</taxon>
        <taxon>Magnoliopsida</taxon>
        <taxon>eudicotyledons</taxon>
        <taxon>Gunneridae</taxon>
        <taxon>Pentapetalae</taxon>
        <taxon>asterids</taxon>
        <taxon>lamiids</taxon>
        <taxon>Solanales</taxon>
        <taxon>Solanaceae</taxon>
        <taxon>Nicotianoideae</taxon>
        <taxon>Nicotianeae</taxon>
        <taxon>Nicotiana</taxon>
    </lineage>
</organism>
<geneLocation type="chloroplast"/>
<feature type="chain" id="PRO_0000144533" description="ATP synthase subunit beta, chloroplastic">
    <location>
        <begin position="1"/>
        <end position="498"/>
    </location>
</feature>
<feature type="binding site" evidence="1">
    <location>
        <begin position="172"/>
        <end position="179"/>
    </location>
    <ligand>
        <name>ATP</name>
        <dbReference type="ChEBI" id="CHEBI:30616"/>
    </ligand>
</feature>
<accession>P26531</accession>
<proteinExistence type="inferred from homology"/>
<dbReference type="EC" id="7.1.2.2" evidence="1"/>
<dbReference type="EMBL" id="X61317">
    <property type="protein sequence ID" value="CAA43610.1"/>
    <property type="molecule type" value="Genomic_DNA"/>
</dbReference>
<dbReference type="PIR" id="S15725">
    <property type="entry name" value="PWNTB9"/>
</dbReference>
<dbReference type="SMR" id="P26531"/>
<dbReference type="GO" id="GO:0009535">
    <property type="term" value="C:chloroplast thylakoid membrane"/>
    <property type="evidence" value="ECO:0007669"/>
    <property type="project" value="UniProtKB-SubCell"/>
</dbReference>
<dbReference type="GO" id="GO:0005739">
    <property type="term" value="C:mitochondrion"/>
    <property type="evidence" value="ECO:0007669"/>
    <property type="project" value="GOC"/>
</dbReference>
<dbReference type="GO" id="GO:0045259">
    <property type="term" value="C:proton-transporting ATP synthase complex"/>
    <property type="evidence" value="ECO:0007669"/>
    <property type="project" value="UniProtKB-KW"/>
</dbReference>
<dbReference type="GO" id="GO:0005524">
    <property type="term" value="F:ATP binding"/>
    <property type="evidence" value="ECO:0007669"/>
    <property type="project" value="UniProtKB-UniRule"/>
</dbReference>
<dbReference type="GO" id="GO:0016887">
    <property type="term" value="F:ATP hydrolysis activity"/>
    <property type="evidence" value="ECO:0007669"/>
    <property type="project" value="InterPro"/>
</dbReference>
<dbReference type="GO" id="GO:0046933">
    <property type="term" value="F:proton-transporting ATP synthase activity, rotational mechanism"/>
    <property type="evidence" value="ECO:0007669"/>
    <property type="project" value="UniProtKB-UniRule"/>
</dbReference>
<dbReference type="GO" id="GO:0042776">
    <property type="term" value="P:proton motive force-driven mitochondrial ATP synthesis"/>
    <property type="evidence" value="ECO:0007669"/>
    <property type="project" value="TreeGrafter"/>
</dbReference>
<dbReference type="CDD" id="cd18110">
    <property type="entry name" value="ATP-synt_F1_beta_C"/>
    <property type="match status" value="1"/>
</dbReference>
<dbReference type="CDD" id="cd18115">
    <property type="entry name" value="ATP-synt_F1_beta_N"/>
    <property type="match status" value="1"/>
</dbReference>
<dbReference type="CDD" id="cd01133">
    <property type="entry name" value="F1-ATPase_beta_CD"/>
    <property type="match status" value="1"/>
</dbReference>
<dbReference type="FunFam" id="1.10.1140.10:FF:000001">
    <property type="entry name" value="ATP synthase subunit beta"/>
    <property type="match status" value="1"/>
</dbReference>
<dbReference type="FunFam" id="3.40.50.12240:FF:000006">
    <property type="entry name" value="ATP synthase subunit beta"/>
    <property type="match status" value="1"/>
</dbReference>
<dbReference type="FunFam" id="3.40.50.300:FF:000004">
    <property type="entry name" value="ATP synthase subunit beta"/>
    <property type="match status" value="1"/>
</dbReference>
<dbReference type="FunFam" id="2.40.10.170:FF:000002">
    <property type="entry name" value="ATP synthase subunit beta, chloroplastic"/>
    <property type="match status" value="1"/>
</dbReference>
<dbReference type="Gene3D" id="2.40.10.170">
    <property type="match status" value="1"/>
</dbReference>
<dbReference type="Gene3D" id="1.10.1140.10">
    <property type="entry name" value="Bovine Mitochondrial F1-atpase, Atp Synthase Beta Chain, Chain D, domain 3"/>
    <property type="match status" value="1"/>
</dbReference>
<dbReference type="Gene3D" id="3.40.50.300">
    <property type="entry name" value="P-loop containing nucleotide triphosphate hydrolases"/>
    <property type="match status" value="1"/>
</dbReference>
<dbReference type="HAMAP" id="MF_01347">
    <property type="entry name" value="ATP_synth_beta_bact"/>
    <property type="match status" value="1"/>
</dbReference>
<dbReference type="InterPro" id="IPR003593">
    <property type="entry name" value="AAA+_ATPase"/>
</dbReference>
<dbReference type="InterPro" id="IPR055190">
    <property type="entry name" value="ATP-synt_VA_C"/>
</dbReference>
<dbReference type="InterPro" id="IPR005722">
    <property type="entry name" value="ATP_synth_F1_bsu"/>
</dbReference>
<dbReference type="InterPro" id="IPR020003">
    <property type="entry name" value="ATPase_a/bsu_AS"/>
</dbReference>
<dbReference type="InterPro" id="IPR050053">
    <property type="entry name" value="ATPase_alpha/beta_chains"/>
</dbReference>
<dbReference type="InterPro" id="IPR004100">
    <property type="entry name" value="ATPase_F1/V1/A1_a/bsu_N"/>
</dbReference>
<dbReference type="InterPro" id="IPR036121">
    <property type="entry name" value="ATPase_F1/V1/A1_a/bsu_N_sf"/>
</dbReference>
<dbReference type="InterPro" id="IPR000194">
    <property type="entry name" value="ATPase_F1/V1/A1_a/bsu_nucl-bd"/>
</dbReference>
<dbReference type="InterPro" id="IPR024034">
    <property type="entry name" value="ATPase_F1/V1_b/a_C"/>
</dbReference>
<dbReference type="InterPro" id="IPR027417">
    <property type="entry name" value="P-loop_NTPase"/>
</dbReference>
<dbReference type="NCBIfam" id="TIGR01039">
    <property type="entry name" value="atpD"/>
    <property type="match status" value="1"/>
</dbReference>
<dbReference type="PANTHER" id="PTHR15184">
    <property type="entry name" value="ATP SYNTHASE"/>
    <property type="match status" value="1"/>
</dbReference>
<dbReference type="PANTHER" id="PTHR15184:SF71">
    <property type="entry name" value="ATP SYNTHASE SUBUNIT BETA, MITOCHONDRIAL"/>
    <property type="match status" value="1"/>
</dbReference>
<dbReference type="Pfam" id="PF00006">
    <property type="entry name" value="ATP-synt_ab"/>
    <property type="match status" value="1"/>
</dbReference>
<dbReference type="Pfam" id="PF02874">
    <property type="entry name" value="ATP-synt_ab_N"/>
    <property type="match status" value="1"/>
</dbReference>
<dbReference type="Pfam" id="PF22919">
    <property type="entry name" value="ATP-synt_VA_C"/>
    <property type="match status" value="1"/>
</dbReference>
<dbReference type="SMART" id="SM00382">
    <property type="entry name" value="AAA"/>
    <property type="match status" value="1"/>
</dbReference>
<dbReference type="SUPFAM" id="SSF47917">
    <property type="entry name" value="C-terminal domain of alpha and beta subunits of F1 ATP synthase"/>
    <property type="match status" value="1"/>
</dbReference>
<dbReference type="SUPFAM" id="SSF50615">
    <property type="entry name" value="N-terminal domain of alpha and beta subunits of F1 ATP synthase"/>
    <property type="match status" value="1"/>
</dbReference>
<dbReference type="SUPFAM" id="SSF52540">
    <property type="entry name" value="P-loop containing nucleoside triphosphate hydrolases"/>
    <property type="match status" value="1"/>
</dbReference>
<dbReference type="PROSITE" id="PS00152">
    <property type="entry name" value="ATPASE_ALPHA_BETA"/>
    <property type="match status" value="1"/>
</dbReference>
<gene>
    <name evidence="1" type="primary">atpB</name>
</gene>
<evidence type="ECO:0000255" key="1">
    <source>
        <dbReference type="HAMAP-Rule" id="MF_01347"/>
    </source>
</evidence>
<reference key="1">
    <citation type="journal article" date="1992" name="Science">
        <title>Tentoxin sensitivity of chloroplasts determined by codon 83 of beta subunit of proton-ATPase.</title>
        <authorList>
            <person name="Avni A."/>
            <person name="Anderson J.D."/>
            <person name="Holland N."/>
            <person name="Rochaix J.-D."/>
            <person name="Gromet-Elhanan Z."/>
            <person name="Edelman M."/>
        </authorList>
    </citation>
    <scope>NUCLEOTIDE SEQUENCE [GENOMIC DNA]</scope>
    <source>
        <strain>cv. Line 92</strain>
    </source>
</reference>